<sequence>MEKYERIRVVGRGAFGIVHLCLRKADQKLVIIKQIPVEQMTKEERQAAQNECQVLKLLNHPNVIEYYENFLEDKALMIAMEYAPGGTLAEFIQKRCNSLLEEETILHFFVQILLALHHVHTHLILHRDLKTQNILLDKHRMVVKIGDFGISKILSSKSKAYTVVGTPCYISPELCEGKPYNQKSDIWALGCVLYELASLKRAFEAANLPALVLKIMSGTFAPISDRYSPELRQLVLSLLSLEPAQRPPLSHIMAQPLCIRALLNLHTDVGSVRMRRAEKSVAPSNTGSRTTSVRCRGIPRGPVRPAIPPPLSSVYAWGGGLGTPLRLPMLNTEVVQVAAGRTQKAGVTRSGRLILWEAPPLGAGGGSLLPGAVEQPQPQFISRFLEGQSGVTIKHVACGDFFTACLTDRGIIMTFGSGSNGCLGHGSLTDISQPTIVEALLGYEMVQVACGASHVLALSTERELFAWGRGDSGRLGLGTRESHSCPQQVPMPPGQEAQRVVCGIDSSMILTVPGQALACGSNRFNKLGLDHLSLGEEPVPHQQVEEALSFTLLGSAPLDQEPLLSIDLGTAHSAAVTASGDCYTFGSNQHGQLGTNTRRGSRAPCKVQGLEGIKMAMVACGDAFTVAIGAESEVYSWGKGARGRLGRRDEDAGLPRPVQLDETHPYTVTSVSCCHGNTLLAVRSVTDEPVPP</sequence>
<organism>
    <name type="scientific">Homo sapiens</name>
    <name type="common">Human</name>
    <dbReference type="NCBI Taxonomy" id="9606"/>
    <lineage>
        <taxon>Eukaryota</taxon>
        <taxon>Metazoa</taxon>
        <taxon>Chordata</taxon>
        <taxon>Craniata</taxon>
        <taxon>Vertebrata</taxon>
        <taxon>Euteleostomi</taxon>
        <taxon>Mammalia</taxon>
        <taxon>Eutheria</taxon>
        <taxon>Euarchontoglires</taxon>
        <taxon>Primates</taxon>
        <taxon>Haplorrhini</taxon>
        <taxon>Catarrhini</taxon>
        <taxon>Hominidae</taxon>
        <taxon>Homo</taxon>
    </lineage>
</organism>
<name>NEK8_HUMAN</name>
<proteinExistence type="evidence at protein level"/>
<reference key="1">
    <citation type="submission" date="2003-02" db="EMBL/GenBank/DDBJ databases">
        <authorList>
            <person name="Huang C.Q."/>
            <person name="Wu S.L."/>
            <person name="Yu L."/>
        </authorList>
    </citation>
    <scope>NUCLEOTIDE SEQUENCE [MRNA]</scope>
</reference>
<reference key="2">
    <citation type="submission" date="2003-04" db="EMBL/GenBank/DDBJ databases">
        <title>NIMA-family kinase Nek8 complete human coding region.</title>
        <authorList>
            <person name="Nedwidek M.N."/>
            <person name="Roig J."/>
            <person name="Lenz G."/>
            <person name="Avruch J."/>
        </authorList>
    </citation>
    <scope>NUCLEOTIDE SEQUENCE [MRNA]</scope>
</reference>
<reference key="3">
    <citation type="journal article" date="2006" name="Nature">
        <title>DNA sequence of human chromosome 17 and analysis of rearrangement in the human lineage.</title>
        <authorList>
            <person name="Zody M.C."/>
            <person name="Garber M."/>
            <person name="Adams D.J."/>
            <person name="Sharpe T."/>
            <person name="Harrow J."/>
            <person name="Lupski J.R."/>
            <person name="Nicholson C."/>
            <person name="Searle S.M."/>
            <person name="Wilming L."/>
            <person name="Young S.K."/>
            <person name="Abouelleil A."/>
            <person name="Allen N.R."/>
            <person name="Bi W."/>
            <person name="Bloom T."/>
            <person name="Borowsky M.L."/>
            <person name="Bugalter B.E."/>
            <person name="Butler J."/>
            <person name="Chang J.L."/>
            <person name="Chen C.-K."/>
            <person name="Cook A."/>
            <person name="Corum B."/>
            <person name="Cuomo C.A."/>
            <person name="de Jong P.J."/>
            <person name="DeCaprio D."/>
            <person name="Dewar K."/>
            <person name="FitzGerald M."/>
            <person name="Gilbert J."/>
            <person name="Gibson R."/>
            <person name="Gnerre S."/>
            <person name="Goldstein S."/>
            <person name="Grafham D.V."/>
            <person name="Grocock R."/>
            <person name="Hafez N."/>
            <person name="Hagopian D.S."/>
            <person name="Hart E."/>
            <person name="Norman C.H."/>
            <person name="Humphray S."/>
            <person name="Jaffe D.B."/>
            <person name="Jones M."/>
            <person name="Kamal M."/>
            <person name="Khodiyar V.K."/>
            <person name="LaButti K."/>
            <person name="Laird G."/>
            <person name="Lehoczky J."/>
            <person name="Liu X."/>
            <person name="Lokyitsang T."/>
            <person name="Loveland J."/>
            <person name="Lui A."/>
            <person name="Macdonald P."/>
            <person name="Major J.E."/>
            <person name="Matthews L."/>
            <person name="Mauceli E."/>
            <person name="McCarroll S.A."/>
            <person name="Mihalev A.H."/>
            <person name="Mudge J."/>
            <person name="Nguyen C."/>
            <person name="Nicol R."/>
            <person name="O'Leary S.B."/>
            <person name="Osoegawa K."/>
            <person name="Schwartz D.C."/>
            <person name="Shaw-Smith C."/>
            <person name="Stankiewicz P."/>
            <person name="Steward C."/>
            <person name="Swarbreck D."/>
            <person name="Venkataraman V."/>
            <person name="Whittaker C.A."/>
            <person name="Yang X."/>
            <person name="Zimmer A.R."/>
            <person name="Bradley A."/>
            <person name="Hubbard T."/>
            <person name="Birren B.W."/>
            <person name="Rogers J."/>
            <person name="Lander E.S."/>
            <person name="Nusbaum C."/>
        </authorList>
    </citation>
    <scope>NUCLEOTIDE SEQUENCE [LARGE SCALE GENOMIC DNA]</scope>
</reference>
<reference key="4">
    <citation type="submission" date="2005-07" db="EMBL/GenBank/DDBJ databases">
        <authorList>
            <person name="Mural R.J."/>
            <person name="Istrail S."/>
            <person name="Sutton G.G."/>
            <person name="Florea L."/>
            <person name="Halpern A.L."/>
            <person name="Mobarry C.M."/>
            <person name="Lippert R."/>
            <person name="Walenz B."/>
            <person name="Shatkay H."/>
            <person name="Dew I."/>
            <person name="Miller J.R."/>
            <person name="Flanigan M.J."/>
            <person name="Edwards N.J."/>
            <person name="Bolanos R."/>
            <person name="Fasulo D."/>
            <person name="Halldorsson B.V."/>
            <person name="Hannenhalli S."/>
            <person name="Turner R."/>
            <person name="Yooseph S."/>
            <person name="Lu F."/>
            <person name="Nusskern D.R."/>
            <person name="Shue B.C."/>
            <person name="Zheng X.H."/>
            <person name="Zhong F."/>
            <person name="Delcher A.L."/>
            <person name="Huson D.H."/>
            <person name="Kravitz S.A."/>
            <person name="Mouchard L."/>
            <person name="Reinert K."/>
            <person name="Remington K.A."/>
            <person name="Clark A.G."/>
            <person name="Waterman M.S."/>
            <person name="Eichler E.E."/>
            <person name="Adams M.D."/>
            <person name="Hunkapiller M.W."/>
            <person name="Myers E.W."/>
            <person name="Venter J.C."/>
        </authorList>
    </citation>
    <scope>NUCLEOTIDE SEQUENCE [LARGE SCALE GENOMIC DNA]</scope>
</reference>
<reference key="5">
    <citation type="journal article" date="2004" name="Genome Res.">
        <title>The status, quality, and expansion of the NIH full-length cDNA project: the Mammalian Gene Collection (MGC).</title>
        <authorList>
            <consortium name="The MGC Project Team"/>
        </authorList>
    </citation>
    <scope>NUCLEOTIDE SEQUENCE [LARGE SCALE MRNA]</scope>
    <source>
        <tissue>Brain</tissue>
    </source>
</reference>
<reference key="6">
    <citation type="journal article" date="2007" name="BMC Genomics">
        <title>The full-ORF clone resource of the German cDNA consortium.</title>
        <authorList>
            <person name="Bechtel S."/>
            <person name="Rosenfelder H."/>
            <person name="Duda A."/>
            <person name="Schmidt C.P."/>
            <person name="Ernst U."/>
            <person name="Wellenreuther R."/>
            <person name="Mehrle A."/>
            <person name="Schuster C."/>
            <person name="Bahr A."/>
            <person name="Bloecker H."/>
            <person name="Heubner D."/>
            <person name="Hoerlein A."/>
            <person name="Michel G."/>
            <person name="Wedler H."/>
            <person name="Koehrer K."/>
            <person name="Ottenwaelder B."/>
            <person name="Poustka A."/>
            <person name="Wiemann S."/>
            <person name="Schupp I."/>
        </authorList>
    </citation>
    <scope>NUCLEOTIDE SEQUENCE [LARGE SCALE MRNA] OF 445-692</scope>
    <source>
        <tissue>Testis</tissue>
    </source>
</reference>
<reference key="7">
    <citation type="journal article" date="2004" name="Gene">
        <title>Nek8, a NIMA family kinase member, is overexpressed in primary human breast tumors.</title>
        <authorList>
            <person name="Bowers A.J."/>
            <person name="Boylan J.F."/>
        </authorList>
    </citation>
    <scope>TISSUE SPECIFICITY</scope>
</reference>
<reference key="8">
    <citation type="journal article" date="2013" name="Hum. Mol. Genet.">
        <title>Mutations in NEK8 link multiple organ dysplasia with altered Hippo signalling and increased c-MYC expression.</title>
        <authorList>
            <person name="Frank V."/>
            <person name="Habbig S."/>
            <person name="Bartram M.P."/>
            <person name="Eisenberger T."/>
            <person name="Veenstra-Knol H.E."/>
            <person name="Decker C."/>
            <person name="Boorsma R.A."/>
            <person name="Goebel H."/>
            <person name="Nuernberg G."/>
            <person name="Griessmann A."/>
            <person name="Franke M."/>
            <person name="Borgal L."/>
            <person name="Kohli P."/>
            <person name="Voelker L.A."/>
            <person name="Doetsch J."/>
            <person name="Nuernberg P."/>
            <person name="Benzing T."/>
            <person name="Bolz H.J."/>
            <person name="Johnson C."/>
            <person name="Gerkes E.H."/>
            <person name="Schermer B."/>
            <person name="Bergmann C."/>
        </authorList>
    </citation>
    <scope>INVOLVEMENT IN RHPD2</scope>
    <scope>FUNCTION</scope>
    <scope>INTERACTION WITH NPHP3</scope>
</reference>
<reference key="9">
    <citation type="journal article" date="2013" name="Nat. Genet.">
        <title>ANKS6 is a central component of a nephronophthisis module linking NEK8 to INVS and NPHP3.</title>
        <authorList>
            <person name="Hoff S."/>
            <person name="Halbritter J."/>
            <person name="Epting D."/>
            <person name="Frank V."/>
            <person name="Nguyen T.M."/>
            <person name="van Reeuwijk J."/>
            <person name="Boehlke C."/>
            <person name="Schell C."/>
            <person name="Yasunaga T."/>
            <person name="Helmstadter M."/>
            <person name="Mergen M."/>
            <person name="Filhol E."/>
            <person name="Boldt K."/>
            <person name="Horn N."/>
            <person name="Ueffing M."/>
            <person name="Otto E.A."/>
            <person name="Eisenberger T."/>
            <person name="Elting M.W."/>
            <person name="van Wijk J.A."/>
            <person name="Bockenhauer D."/>
            <person name="Sebire N.J."/>
            <person name="Rittig S."/>
            <person name="Vyberg M."/>
            <person name="Ring T."/>
            <person name="Pohl M."/>
            <person name="Pape L."/>
            <person name="Neuhaus T.J."/>
            <person name="Elshakhs N.A."/>
            <person name="Koon S.J."/>
            <person name="Harris P.C."/>
            <person name="Grahammer F."/>
            <person name="Huber T.B."/>
            <person name="Kuehn E.W."/>
            <person name="Kramer-Zucker A."/>
            <person name="Bolz H.J."/>
            <person name="Roepman R."/>
            <person name="Saunier S."/>
            <person name="Walz G."/>
            <person name="Hildebrandt F."/>
            <person name="Bergmann C."/>
            <person name="Lienkamp S.S."/>
        </authorList>
    </citation>
    <scope>INTERACTION WITH ANKS6; INVS AND NPHP3</scope>
</reference>
<reference key="10">
    <citation type="journal article" date="2015" name="Biochem. Biophys. Res. Commun.">
        <title>Anks3 alters the sub-cellular localization of the Nek7 kinase.</title>
        <authorList>
            <person name="Ramachandran H."/>
            <person name="Engel C."/>
            <person name="Mueller B."/>
            <person name="Dengjel J."/>
            <person name="Walz G."/>
            <person name="Yakulov T.A."/>
        </authorList>
    </citation>
    <scope>INTERACTION WITH ANKS3</scope>
</reference>
<reference key="11">
    <citation type="journal article" date="2008" name="J. Am. Soc. Nephrol.">
        <title>NEK8 mutations affect ciliary and centrosomal localization and may cause nephronophthisis.</title>
        <authorList>
            <person name="Otto E.A."/>
            <person name="Trapp M.L."/>
            <person name="Schultheiss U.T."/>
            <person name="Helou J."/>
            <person name="Quarmby L.M."/>
            <person name="Hildebrandt F."/>
        </authorList>
    </citation>
    <scope>VARIANTS NPHP9 PHE-330; TYR-425 AND PRO-497</scope>
    <scope>CHARACTERIZATION OF VARIANTS NPHP9 PHE-330; TYR-425 AND PRO-497</scope>
    <scope>SUBCELLULAR LOCATION</scope>
</reference>
<reference key="12">
    <citation type="journal article" date="2016" name="PLoS Genet.">
        <title>Novel NEK8 Mutations Cause Severe Syndromic Renal Cystic Dysplasia through YAP Dysregulation.</title>
        <authorList>
            <person name="Grampa V."/>
            <person name="Delous M."/>
            <person name="Zaidan M."/>
            <person name="Odye G."/>
            <person name="Thomas S."/>
            <person name="Elkhartoufi N."/>
            <person name="Filhol E."/>
            <person name="Niel O."/>
            <person name="Silbermann F."/>
            <person name="Lebreton C."/>
            <person name="Collardeau-Frachon S."/>
            <person name="Rouvet I."/>
            <person name="Alessandri J.L."/>
            <person name="Devisme L."/>
            <person name="Dieux-Coeslier A."/>
            <person name="Cordier M.P."/>
            <person name="Capri Y."/>
            <person name="Khung-Savatovsky S."/>
            <person name="Sigaudy S."/>
            <person name="Salomon R."/>
            <person name="Antignac C."/>
            <person name="Gubler M.C."/>
            <person name="Benmerah A."/>
            <person name="Terzi F."/>
            <person name="Attie-Bitach T."/>
            <person name="Jeanpierre C."/>
            <person name="Saunier S."/>
        </authorList>
    </citation>
    <scope>VARIANTS RHPD2 ALA-87; 127-ARG--PRO-692 DEL; SER-416; 462-ARG--PRO-692 DEL; SER-580 AND TRP-602</scope>
    <scope>CHARACTERIZATION OF VARIANTS RHPD2 ALA-87; 127-ARG--PRO-692 DEL; 462-ARG--PRO-692 DEL; SER-580 AND TRP-602</scope>
    <scope>CHARACTERIZATION OF VARIANT NPHP9 TYR-425</scope>
    <scope>INTERACTION WITH ANKS6</scope>
    <scope>SUBCELLULAR LOCATION</scope>
    <scope>FUNCTION</scope>
</reference>
<reference key="13">
    <citation type="journal article" date="2023" name="Kidney Int.">
        <title>Certain heterozygous variants in the kinase domain of the serine/threonine kinase NEK8 can cause an autosomal dominant form of polycystic kidney disease.</title>
        <authorList>
            <consortium name="Genomics England Research Consortium"/>
            <person name="Claus L.R."/>
            <person name="Chen C."/>
            <person name="Stallworth J."/>
            <person name="Turner J.L."/>
            <person name="Slaats G.G."/>
            <person name="Hawks A.L."/>
            <person name="Mabillard H."/>
            <person name="Senum S.R."/>
            <person name="Srikanth S."/>
            <person name="Flanagan-Steet H."/>
            <person name="Louie R.J."/>
            <person name="Silver J."/>
            <person name="Lerner-Ellis J."/>
            <person name="Morel C."/>
            <person name="Mighton C."/>
            <person name="Sleutels F."/>
            <person name="van Slegtenhorst M."/>
            <person name="van Ham T."/>
            <person name="Brooks A.S."/>
            <person name="Dorresteijn E.M."/>
            <person name="Barakat T.S."/>
            <person name="Dahan K."/>
            <person name="Demoulin N."/>
            <person name="Goffin E.J."/>
            <person name="Olinger E."/>
            <person name="Larsen M."/>
            <person name="Hertz J.M."/>
            <person name="Lilien M.R."/>
            <person name="Obeidova L."/>
            <person name="Seeman T."/>
            <person name="Stone H.K."/>
            <person name="Kerecuk L."/>
            <person name="Gurgu M."/>
            <person name="Yousef Yengej F.A."/>
            <person name="Ammerlaan C.M.E."/>
            <person name="Rookmaaker M.B."/>
            <person name="Hanna C."/>
            <person name="Rogers R.C."/>
            <person name="Duran K."/>
            <person name="Peters E."/>
            <person name="Sayer J.A."/>
            <person name="van Haaften G."/>
            <person name="Harris P.C."/>
            <person name="Ling K."/>
            <person name="Mason J.M."/>
            <person name="van Eerde A.M."/>
            <person name="Steet R."/>
        </authorList>
    </citation>
    <scope>VARIANTS PKD8 TRP-45; MET-150 AND GLN-157</scope>
    <scope>CHARACTERIZATION OF VARIANTS PKD8 TRP-45; MET-150 AND GLN-157</scope>
    <scope>INVOLVEMENT IN PKD8</scope>
    <scope>FUNCTION</scope>
</reference>
<reference key="14">
    <citation type="journal article" date="2023" name="Nephron">
        <title>NEK8-Associated Nephropathies: Do Autosomal Dominant Forms Exist?</title>
        <authorList>
            <person name="Mehawej C."/>
            <person name="Chouery E."/>
            <person name="Ghabril R."/>
            <person name="Tokajian S."/>
            <person name="Megarbane A."/>
        </authorList>
    </citation>
    <scope>VARIANT PKD8 TRP-45</scope>
    <scope>INVOLVEMENT IN PKD8</scope>
</reference>
<protein>
    <recommendedName>
        <fullName>Serine/threonine-protein kinase Nek8</fullName>
        <ecNumber>2.7.11.1</ecNumber>
    </recommendedName>
    <alternativeName>
        <fullName>Never in mitosis A-related kinase 8</fullName>
        <shortName>NimA-related protein kinase 8</shortName>
    </alternativeName>
    <alternativeName>
        <fullName>Nima-related protein kinase 12a</fullName>
    </alternativeName>
</protein>
<accession>Q86SG6</accession>
<accession>A6NIC5</accession>
<accession>Q14CL7</accession>
<accession>Q2M1S6</accession>
<accession>Q8NDH1</accession>
<keyword id="KW-0067">ATP-binding</keyword>
<keyword id="KW-0966">Cell projection</keyword>
<keyword id="KW-1186">Ciliopathy</keyword>
<keyword id="KW-0969">Cilium</keyword>
<keyword id="KW-0963">Cytoplasm</keyword>
<keyword id="KW-0206">Cytoskeleton</keyword>
<keyword id="KW-0225">Disease variant</keyword>
<keyword id="KW-0418">Kinase</keyword>
<keyword id="KW-0460">Magnesium</keyword>
<keyword id="KW-0479">Metal-binding</keyword>
<keyword id="KW-0983">Nephronophthisis</keyword>
<keyword id="KW-0547">Nucleotide-binding</keyword>
<keyword id="KW-0597">Phosphoprotein</keyword>
<keyword id="KW-1267">Proteomics identification</keyword>
<keyword id="KW-1185">Reference proteome</keyword>
<keyword id="KW-0677">Repeat</keyword>
<keyword id="KW-0723">Serine/threonine-protein kinase</keyword>
<keyword id="KW-0808">Transferase</keyword>
<evidence type="ECO:0000250" key="1"/>
<evidence type="ECO:0000250" key="2">
    <source>
        <dbReference type="UniProtKB" id="Q91ZR4"/>
    </source>
</evidence>
<evidence type="ECO:0000255" key="3">
    <source>
        <dbReference type="PROSITE-ProRule" id="PRU00159"/>
    </source>
</evidence>
<evidence type="ECO:0000255" key="4">
    <source>
        <dbReference type="PROSITE-ProRule" id="PRU10027"/>
    </source>
</evidence>
<evidence type="ECO:0000256" key="5">
    <source>
        <dbReference type="SAM" id="MobiDB-lite"/>
    </source>
</evidence>
<evidence type="ECO:0000269" key="6">
    <source>
    </source>
</evidence>
<evidence type="ECO:0000269" key="7">
    <source>
    </source>
</evidence>
<evidence type="ECO:0000269" key="8">
    <source>
    </source>
</evidence>
<evidence type="ECO:0000269" key="9">
    <source>
    </source>
</evidence>
<evidence type="ECO:0000269" key="10">
    <source>
    </source>
</evidence>
<evidence type="ECO:0000269" key="11">
    <source>
    </source>
</evidence>
<evidence type="ECO:0000269" key="12">
    <source>
    </source>
</evidence>
<evidence type="ECO:0000269" key="13">
    <source>
    </source>
</evidence>
<evidence type="ECO:0000305" key="14"/>
<comment type="function">
    <text evidence="8 11 13">Required for renal tubular integrity. May regulate local cytoskeletal structure in kidney tubule epithelial cells. May regulate ciliary biogenesis through targeting of proteins to the cilia (PubMed:37598857). Plays a role in organogenesis, and is involved in the regulation of the Hippo signaling pathway (PubMed:26967905).</text>
</comment>
<comment type="catalytic activity">
    <reaction>
        <text>L-seryl-[protein] + ATP = O-phospho-L-seryl-[protein] + ADP + H(+)</text>
        <dbReference type="Rhea" id="RHEA:17989"/>
        <dbReference type="Rhea" id="RHEA-COMP:9863"/>
        <dbReference type="Rhea" id="RHEA-COMP:11604"/>
        <dbReference type="ChEBI" id="CHEBI:15378"/>
        <dbReference type="ChEBI" id="CHEBI:29999"/>
        <dbReference type="ChEBI" id="CHEBI:30616"/>
        <dbReference type="ChEBI" id="CHEBI:83421"/>
        <dbReference type="ChEBI" id="CHEBI:456216"/>
        <dbReference type="EC" id="2.7.11.1"/>
    </reaction>
</comment>
<comment type="catalytic activity">
    <reaction>
        <text>L-threonyl-[protein] + ATP = O-phospho-L-threonyl-[protein] + ADP + H(+)</text>
        <dbReference type="Rhea" id="RHEA:46608"/>
        <dbReference type="Rhea" id="RHEA-COMP:11060"/>
        <dbReference type="Rhea" id="RHEA-COMP:11605"/>
        <dbReference type="ChEBI" id="CHEBI:15378"/>
        <dbReference type="ChEBI" id="CHEBI:30013"/>
        <dbReference type="ChEBI" id="CHEBI:30616"/>
        <dbReference type="ChEBI" id="CHEBI:61977"/>
        <dbReference type="ChEBI" id="CHEBI:456216"/>
        <dbReference type="EC" id="2.7.11.1"/>
    </reaction>
</comment>
<comment type="cofactor">
    <cofactor evidence="1">
        <name>Mg(2+)</name>
        <dbReference type="ChEBI" id="CHEBI:18420"/>
    </cofactor>
</comment>
<comment type="subunit">
    <text evidence="2 8 9 10">Interacts with PKD2; may regulate PKD2 targeting to the cilium (By similarity). Interacts with ANKS6 (PubMed:26967905). Component of a complex containing at least ANKS6, INVS, NEK8 and NPHP3 (PubMed:23418306, PubMed:23793029). ANKS6 may organize complex assembly by linking INVS and NPHP3 to NEK8 and INVS may target the complex to the proximal ciliary axoneme (PubMed:23418306, PubMed:23793029). Interacts with ANKS3 (PubMed:26188091).</text>
</comment>
<comment type="interaction">
    <interactant intactId="EBI-1752987">
        <id>Q86SG6</id>
    </interactant>
    <interactant intactId="EBI-10173507">
        <id>Q6UY14-3</id>
        <label>ADAMTSL4</label>
    </interactant>
    <organismsDiffer>false</organismsDiffer>
    <experiments>3</experiments>
</comment>
<comment type="interaction">
    <interactant intactId="EBI-1752987">
        <id>Q86SG6</id>
    </interactant>
    <interactant intactId="EBI-930964">
        <id>P54253</id>
        <label>ATXN1</label>
    </interactant>
    <organismsDiffer>false</organismsDiffer>
    <experiments>3</experiments>
</comment>
<comment type="interaction">
    <interactant intactId="EBI-1752987">
        <id>Q86SG6</id>
    </interactant>
    <interactant intactId="EBI-352572">
        <id>P08238</id>
        <label>HSP90AB1</label>
    </interactant>
    <organismsDiffer>false</organismsDiffer>
    <experiments>2</experiments>
</comment>
<comment type="interaction">
    <interactant intactId="EBI-1752987">
        <id>Q86SG6</id>
    </interactant>
    <interactant intactId="EBI-466029">
        <id>P42858</id>
        <label>HTT</label>
    </interactant>
    <organismsDiffer>false</organismsDiffer>
    <experiments>3</experiments>
</comment>
<comment type="interaction">
    <interactant intactId="EBI-1752987">
        <id>Q86SG6</id>
    </interactant>
    <interactant intactId="EBI-11953846">
        <id>Q52LG2</id>
        <label>KRTAP13-2</label>
    </interactant>
    <organismsDiffer>false</organismsDiffer>
    <experiments>3</experiments>
</comment>
<comment type="interaction">
    <interactant intactId="EBI-1752987">
        <id>Q86SG6</id>
    </interactant>
    <interactant intactId="EBI-1052153">
        <id>Q8WVJ2</id>
        <label>NUDCD2</label>
    </interactant>
    <organismsDiffer>false</organismsDiffer>
    <experiments>3</experiments>
</comment>
<comment type="interaction">
    <interactant intactId="EBI-1752987">
        <id>Q86SG6</id>
    </interactant>
    <interactant intactId="EBI-12813389">
        <id>Q8TDS5</id>
        <label>OXER1</label>
    </interactant>
    <organismsDiffer>false</organismsDiffer>
    <experiments>3</experiments>
</comment>
<comment type="interaction">
    <interactant intactId="EBI-1752987">
        <id>Q86SG6</id>
    </interactant>
    <interactant intactId="EBI-10178530">
        <id>O76081-6</id>
        <label>RGS20</label>
    </interactant>
    <organismsDiffer>false</organismsDiffer>
    <experiments>3</experiments>
</comment>
<comment type="interaction">
    <interactant intactId="EBI-1752987">
        <id>Q86SG6</id>
    </interactant>
    <interactant intactId="EBI-533224">
        <id>P15884</id>
        <label>TCF4</label>
    </interactant>
    <organismsDiffer>false</organismsDiffer>
    <experiments>3</experiments>
</comment>
<comment type="interaction">
    <interactant intactId="EBI-1752987">
        <id>Q86SG6</id>
    </interactant>
    <interactant intactId="EBI-5235829">
        <id>Q8IWZ5</id>
        <label>TRIM42</label>
    </interactant>
    <organismsDiffer>false</organismsDiffer>
    <experiments>3</experiments>
</comment>
<comment type="interaction">
    <interactant intactId="EBI-1752987">
        <id>Q86SG6</id>
    </interactant>
    <interactant intactId="EBI-749955">
        <id>Q86WT6</id>
        <label>TRIM69</label>
    </interactant>
    <organismsDiffer>false</organismsDiffer>
    <experiments>3</experiments>
</comment>
<comment type="interaction">
    <interactant intactId="EBI-1752987">
        <id>Q86SG6</id>
    </interactant>
    <interactant intactId="EBI-11525489">
        <id>Q86WT6-2</id>
        <label>TRIM69</label>
    </interactant>
    <organismsDiffer>false</organismsDiffer>
    <experiments>3</experiments>
</comment>
<comment type="subcellular location">
    <subcellularLocation>
        <location evidence="7">Cytoplasm</location>
    </subcellularLocation>
    <subcellularLocation>
        <location evidence="2">Cytoplasm</location>
        <location evidence="2">Cytoskeleton</location>
    </subcellularLocation>
    <subcellularLocation>
        <location evidence="7">Cell projection</location>
        <location evidence="7">Cilium</location>
    </subcellularLocation>
    <subcellularLocation>
        <location evidence="7">Cytoplasm</location>
        <location evidence="7">Cytoskeleton</location>
        <location evidence="7">Microtubule organizing center</location>
        <location evidence="7">Centrosome</location>
    </subcellularLocation>
    <subcellularLocation>
        <location evidence="11">Cytoplasm</location>
        <location evidence="11">Cytoskeleton</location>
        <location evidence="11">Cilium axoneme</location>
    </subcellularLocation>
    <text evidence="2">Predominantly cytoplasmic. Localizes to the proximal region of the primary cilium and is not observed in dividing cells.</text>
</comment>
<comment type="tissue specificity">
    <text evidence="6">Highest expression in thyroid, adrenal gland and skin. Low levels in spleen, colon and uterus. Overexpressed in breast tumors, with highest expression in infiltrating ductal carcinomas and moderate levels in mucinous adenocarcinoma.</text>
</comment>
<comment type="disease" evidence="7 11">
    <disease id="DI-03050">
        <name>Nephronophthisis 9</name>
        <acronym>NPHP9</acronym>
        <description>An autosomal recessive disorder resulting in end-stage renal disease. It is a progressive tubulo-interstitial kidney disorder histologically characterized by modifications of the tubules with thickening of the basement membrane, interstitial fibrosis and, in the advanced stages, medullary cysts.</description>
        <dbReference type="MIM" id="613824"/>
    </disease>
    <text>The disease is caused by variants affecting the gene represented in this entry.</text>
</comment>
<comment type="disease" evidence="8 11">
    <disease id="DI-03891">
        <name>Renal-hepatic-pancreatic dysplasia 2</name>
        <acronym>RHPD2</acronym>
        <description>A form of renal-hepatic-pancreatic dysplasia, a disease characterized by cystic malformations of the kidneys, liver, and pancreas. The pathological findings consist of multicystic dysplastic kidneys, dilated and dysgenetic bile ducts, a dysplastic pancreas with dilated ducts, cysts, fibrosis and inflammatory infiltrates.</description>
        <dbReference type="MIM" id="615415"/>
    </disease>
    <text>The disease is caused by variants affecting the gene represented in this entry.</text>
</comment>
<comment type="disease" evidence="12 13">
    <disease id="DI-06926">
        <name>Polycystic kidney disease 8</name>
        <acronym>PKD8</acronym>
        <description>A form of polycystic kidney disease, a disorder characterized by progressive formation and enlargement of cysts in both kidneys, typically leading to end-stage renal disease in adult life. Cysts may also occur in other organs, particularly the liver. PKD8 inheritance is autosomal dominant.</description>
        <dbReference type="MIM" id="620903"/>
    </disease>
    <text>The disease is caused by variants affecting the gene represented in this entry.</text>
</comment>
<comment type="similarity">
    <text evidence="14">Belongs to the protein kinase superfamily. NEK Ser/Thr protein kinase family. NIMA subfamily.</text>
</comment>
<gene>
    <name type="primary">NEK8</name>
    <name type="synonym">JCK</name>
    <name type="synonym">NEK12A</name>
</gene>
<feature type="chain" id="PRO_0000086432" description="Serine/threonine-protein kinase Nek8">
    <location>
        <begin position="1"/>
        <end position="692"/>
    </location>
</feature>
<feature type="domain" description="Protein kinase" evidence="3">
    <location>
        <begin position="4"/>
        <end position="258"/>
    </location>
</feature>
<feature type="repeat" description="RCC1 1">
    <location>
        <begin position="312"/>
        <end position="350"/>
    </location>
</feature>
<feature type="repeat" description="RCC1 2">
    <location>
        <begin position="410"/>
        <end position="461"/>
    </location>
</feature>
<feature type="repeat" description="RCC1 3">
    <location>
        <begin position="462"/>
        <end position="513"/>
    </location>
</feature>
<feature type="repeat" description="RCC1 4">
    <location>
        <begin position="580"/>
        <end position="631"/>
    </location>
</feature>
<feature type="repeat" description="RCC1 5">
    <location>
        <begin position="632"/>
        <end position="684"/>
    </location>
</feature>
<feature type="region of interest" description="Disordered" evidence="5">
    <location>
        <begin position="277"/>
        <end position="301"/>
    </location>
</feature>
<feature type="compositionally biased region" description="Polar residues" evidence="5">
    <location>
        <begin position="282"/>
        <end position="293"/>
    </location>
</feature>
<feature type="active site" description="Proton acceptor" evidence="3 4">
    <location>
        <position position="128"/>
    </location>
</feature>
<feature type="binding site" evidence="3">
    <location>
        <begin position="10"/>
        <end position="18"/>
    </location>
    <ligand>
        <name>ATP</name>
        <dbReference type="ChEBI" id="CHEBI:30616"/>
    </ligand>
</feature>
<feature type="binding site" evidence="3">
    <location>
        <position position="33"/>
    </location>
    <ligand>
        <name>ATP</name>
        <dbReference type="ChEBI" id="CHEBI:30616"/>
    </ligand>
</feature>
<feature type="modified residue" description="Phosphothreonine; by autocatalysis" evidence="1">
    <location>
        <position position="162"/>
    </location>
</feature>
<feature type="sequence variant" id="VAR_089841" description="In PKD8; pathogenic; fails to rescue defective PKD2 targeting to cilia in NEK8-deficient epithelial renal cells; decreased autophosphorylation; dbSNP:rs1567759130." evidence="12 13">
    <original>R</original>
    <variation>W</variation>
    <location>
        <position position="45"/>
    </location>
</feature>
<feature type="sequence variant" id="VAR_089842" description="In RHPD2; likely pathogenic; contrary to the wild type, it fails to rescue body curvature defects in zebrafish morphants; decreased localization to cilia; decreased interaction with ANKS6; dbSNP:rs1555563787." evidence="11">
    <original>T</original>
    <variation>A</variation>
    <location>
        <position position="87"/>
    </location>
</feature>
<feature type="sequence variant" id="VAR_089843" description="In RHPD2; likely pathogenic; loss of protein expression." evidence="11">
    <location>
        <begin position="127"/>
        <end position="692"/>
    </location>
</feature>
<feature type="sequence variant" id="VAR_089844" description="In PKD8; uncertain significance; it rescues ciliary defects when transfected in NEK8-deficient epithelial renal cells." evidence="13">
    <original>I</original>
    <variation>M</variation>
    <location>
        <position position="150"/>
    </location>
</feature>
<feature type="sequence variant" id="VAR_089845" description="In PKD8; likely pathogenic; contrary to the wild type, it does not rescue ciliary defects when transfected in NEK8-deficient epithelial renal cells." evidence="13">
    <original>K</original>
    <variation>Q</variation>
    <location>
        <position position="157"/>
    </location>
</feature>
<feature type="sequence variant" id="VAR_065769" description="In NPHP9; a full-length mouse NEK8 construct containing the mutation shows a defect in ciliary localization with no apparent effect on ciliation, mitosis or centriole number; dbSNP:rs199962228." evidence="7">
    <original>L</original>
    <variation>F</variation>
    <location>
        <position position="330"/>
    </location>
</feature>
<feature type="sequence variant" id="VAR_089846" description="In RHPD2; uncertain significance; dbSNP:rs199823733." evidence="11">
    <original>G</original>
    <variation>S</variation>
    <location>
        <position position="416"/>
    </location>
</feature>
<feature type="sequence variant" id="VAR_065770" description="In NPHP9; loss of ciliary localization; a full-length mouse NEK8 construct containing the mutation shows a defect in ciliary localization with no apparent effect on ciliation, mitosis or centriole number; no effect on interaction with ANKS6; dbSNP:rs118204032." evidence="7">
    <original>H</original>
    <variation>Y</variation>
    <location>
        <position position="425"/>
    </location>
</feature>
<feature type="sequence variant" id="VAR_089847" description="In RHPD2; likely pathogenic; loss of protein expression." evidence="11">
    <location>
        <begin position="462"/>
        <end position="692"/>
    </location>
</feature>
<feature type="sequence variant" id="VAR_065771" description="In NPHP9; a full-length mouse NEK8 construct containing the mutation shows a defect in ciliary localization with no apparent effect on ciliation, mitosis or centriole number; dbSNP:rs146326420." evidence="7">
    <original>A</original>
    <variation>P</variation>
    <location>
        <position position="497"/>
    </location>
</feature>
<feature type="sequence variant" id="VAR_089848" description="In RHPD2; likely pathogenic; loss of ciliary localization; no effect on interaction with ANKS6; dbSNP:rs751440831." evidence="11">
    <original>G</original>
    <variation>S</variation>
    <location>
        <position position="580"/>
    </location>
</feature>
<feature type="sequence variant" id="VAR_089849" description="In RHPD2; likely pathogenic; contrary to the wild type, it fails to rescue body curvature defects in zebrafish morphants; loss of ciliary localization; no effect on interaction with ANKS6; dbSNP:rs773883764." evidence="11">
    <original>R</original>
    <variation>W</variation>
    <location>
        <position position="602"/>
    </location>
</feature>
<dbReference type="EC" id="2.7.11.1"/>
<dbReference type="EMBL" id="AY242354">
    <property type="protein sequence ID" value="AAO88243.1"/>
    <property type="molecule type" value="mRNA"/>
</dbReference>
<dbReference type="EMBL" id="AY267371">
    <property type="protein sequence ID" value="AAP04006.1"/>
    <property type="molecule type" value="mRNA"/>
</dbReference>
<dbReference type="EMBL" id="AC010761">
    <property type="status" value="NOT_ANNOTATED_CDS"/>
    <property type="molecule type" value="Genomic_DNA"/>
</dbReference>
<dbReference type="EMBL" id="CH471159">
    <property type="protein sequence ID" value="EAW51136.1"/>
    <property type="molecule type" value="Genomic_DNA"/>
</dbReference>
<dbReference type="EMBL" id="BC112240">
    <property type="protein sequence ID" value="AAI12241.1"/>
    <property type="molecule type" value="mRNA"/>
</dbReference>
<dbReference type="EMBL" id="BC113705">
    <property type="protein sequence ID" value="AAI13706.1"/>
    <property type="molecule type" value="mRNA"/>
</dbReference>
<dbReference type="EMBL" id="AL833909">
    <property type="protein sequence ID" value="CAD38765.1"/>
    <property type="molecule type" value="mRNA"/>
</dbReference>
<dbReference type="CCDS" id="CCDS32597.1"/>
<dbReference type="RefSeq" id="NP_835464.1">
    <property type="nucleotide sequence ID" value="NM_178170.3"/>
</dbReference>
<dbReference type="SMR" id="Q86SG6"/>
<dbReference type="BioGRID" id="129755">
    <property type="interactions" value="63"/>
</dbReference>
<dbReference type="CORUM" id="Q86SG6"/>
<dbReference type="FunCoup" id="Q86SG6">
    <property type="interactions" value="177"/>
</dbReference>
<dbReference type="IntAct" id="Q86SG6">
    <property type="interactions" value="64"/>
</dbReference>
<dbReference type="STRING" id="9606.ENSP00000268766"/>
<dbReference type="BindingDB" id="Q86SG6"/>
<dbReference type="ChEMBL" id="CHEMBL2417353"/>
<dbReference type="iPTMnet" id="Q86SG6"/>
<dbReference type="PhosphoSitePlus" id="Q86SG6"/>
<dbReference type="BioMuta" id="NEK8"/>
<dbReference type="DMDM" id="34098463"/>
<dbReference type="jPOST" id="Q86SG6"/>
<dbReference type="MassIVE" id="Q86SG6"/>
<dbReference type="PaxDb" id="9606-ENSP00000268766"/>
<dbReference type="PeptideAtlas" id="Q86SG6"/>
<dbReference type="ProteomicsDB" id="69588"/>
<dbReference type="Pumba" id="Q86SG6"/>
<dbReference type="Antibodypedia" id="26547">
    <property type="antibodies" value="285 antibodies from 26 providers"/>
</dbReference>
<dbReference type="DNASU" id="284086"/>
<dbReference type="Ensembl" id="ENST00000268766.11">
    <property type="protein sequence ID" value="ENSP00000268766.6"/>
    <property type="gene ID" value="ENSG00000160602.14"/>
</dbReference>
<dbReference type="GeneID" id="284086"/>
<dbReference type="KEGG" id="hsa:284086"/>
<dbReference type="MANE-Select" id="ENST00000268766.11">
    <property type="protein sequence ID" value="ENSP00000268766.6"/>
    <property type="RefSeq nucleotide sequence ID" value="NM_178170.3"/>
    <property type="RefSeq protein sequence ID" value="NP_835464.1"/>
</dbReference>
<dbReference type="UCSC" id="uc002hcp.4">
    <property type="organism name" value="human"/>
</dbReference>
<dbReference type="AGR" id="HGNC:13387"/>
<dbReference type="CTD" id="284086"/>
<dbReference type="DisGeNET" id="284086"/>
<dbReference type="GeneCards" id="NEK8"/>
<dbReference type="GeneReviews" id="NEK8"/>
<dbReference type="HGNC" id="HGNC:13387">
    <property type="gene designation" value="NEK8"/>
</dbReference>
<dbReference type="HPA" id="ENSG00000160602">
    <property type="expression patterns" value="Low tissue specificity"/>
</dbReference>
<dbReference type="MalaCards" id="NEK8"/>
<dbReference type="MIM" id="609799">
    <property type="type" value="gene"/>
</dbReference>
<dbReference type="MIM" id="613824">
    <property type="type" value="phenotype"/>
</dbReference>
<dbReference type="MIM" id="615415">
    <property type="type" value="phenotype"/>
</dbReference>
<dbReference type="MIM" id="620903">
    <property type="type" value="phenotype"/>
</dbReference>
<dbReference type="neXtProt" id="NX_Q86SG6"/>
<dbReference type="OpenTargets" id="ENSG00000160602"/>
<dbReference type="Orphanet" id="93591">
    <property type="disease" value="Infantile nephronophthisis"/>
</dbReference>
<dbReference type="Orphanet" id="294415">
    <property type="disease" value="Renal-hepatic-pancreatic dysplasia"/>
</dbReference>
<dbReference type="PharmGKB" id="PA38361"/>
<dbReference type="VEuPathDB" id="HostDB:ENSG00000160602"/>
<dbReference type="eggNOG" id="KOG0589">
    <property type="taxonomic scope" value="Eukaryota"/>
</dbReference>
<dbReference type="GeneTree" id="ENSGT00940000159297"/>
<dbReference type="HOGENOM" id="CLU_000288_123_1_1"/>
<dbReference type="InParanoid" id="Q86SG6"/>
<dbReference type="OrthoDB" id="248923at2759"/>
<dbReference type="PAN-GO" id="Q86SG6">
    <property type="GO annotations" value="7 GO annotations based on evolutionary models"/>
</dbReference>
<dbReference type="PhylomeDB" id="Q86SG6"/>
<dbReference type="TreeFam" id="TF106472"/>
<dbReference type="PathwayCommons" id="Q86SG6"/>
<dbReference type="SignaLink" id="Q86SG6"/>
<dbReference type="SIGNOR" id="Q86SG6"/>
<dbReference type="BioGRID-ORCS" id="284086">
    <property type="hits" value="18 hits in 1190 CRISPR screens"/>
</dbReference>
<dbReference type="CD-CODE" id="8C2F96ED">
    <property type="entry name" value="Centrosome"/>
</dbReference>
<dbReference type="GeneWiki" id="NEK8"/>
<dbReference type="GenomeRNAi" id="284086"/>
<dbReference type="Pharos" id="Q86SG6">
    <property type="development level" value="Tchem"/>
</dbReference>
<dbReference type="PRO" id="PR:Q86SG6"/>
<dbReference type="Proteomes" id="UP000005640">
    <property type="component" value="Chromosome 17"/>
</dbReference>
<dbReference type="RNAct" id="Q86SG6">
    <property type="molecule type" value="protein"/>
</dbReference>
<dbReference type="Bgee" id="ENSG00000160602">
    <property type="expression patterns" value="Expressed in buccal mucosa cell and 133 other cell types or tissues"/>
</dbReference>
<dbReference type="ExpressionAtlas" id="Q86SG6">
    <property type="expression patterns" value="baseline and differential"/>
</dbReference>
<dbReference type="GO" id="GO:0005813">
    <property type="term" value="C:centrosome"/>
    <property type="evidence" value="ECO:0007669"/>
    <property type="project" value="UniProtKB-SubCell"/>
</dbReference>
<dbReference type="GO" id="GO:0097546">
    <property type="term" value="C:ciliary base"/>
    <property type="evidence" value="ECO:0007669"/>
    <property type="project" value="Ensembl"/>
</dbReference>
<dbReference type="GO" id="GO:0097543">
    <property type="term" value="C:ciliary inversin compartment"/>
    <property type="evidence" value="ECO:0007669"/>
    <property type="project" value="Ensembl"/>
</dbReference>
<dbReference type="GO" id="GO:0005929">
    <property type="term" value="C:cilium"/>
    <property type="evidence" value="ECO:0000314"/>
    <property type="project" value="UniProtKB"/>
</dbReference>
<dbReference type="GO" id="GO:0005737">
    <property type="term" value="C:cytoplasm"/>
    <property type="evidence" value="ECO:0007669"/>
    <property type="project" value="UniProtKB-SubCell"/>
</dbReference>
<dbReference type="GO" id="GO:0005524">
    <property type="term" value="F:ATP binding"/>
    <property type="evidence" value="ECO:0007669"/>
    <property type="project" value="UniProtKB-KW"/>
</dbReference>
<dbReference type="GO" id="GO:0046872">
    <property type="term" value="F:metal ion binding"/>
    <property type="evidence" value="ECO:0007669"/>
    <property type="project" value="UniProtKB-KW"/>
</dbReference>
<dbReference type="GO" id="GO:0106310">
    <property type="term" value="F:protein serine kinase activity"/>
    <property type="evidence" value="ECO:0007669"/>
    <property type="project" value="RHEA"/>
</dbReference>
<dbReference type="GO" id="GO:0004674">
    <property type="term" value="F:protein serine/threonine kinase activity"/>
    <property type="evidence" value="ECO:0007669"/>
    <property type="project" value="UniProtKB-KW"/>
</dbReference>
<dbReference type="GO" id="GO:0009887">
    <property type="term" value="P:animal organ morphogenesis"/>
    <property type="evidence" value="ECO:0000315"/>
    <property type="project" value="UniProtKB"/>
</dbReference>
<dbReference type="GO" id="GO:0007368">
    <property type="term" value="P:determination of left/right symmetry"/>
    <property type="evidence" value="ECO:0007669"/>
    <property type="project" value="Ensembl"/>
</dbReference>
<dbReference type="GO" id="GO:0007507">
    <property type="term" value="P:heart development"/>
    <property type="evidence" value="ECO:0007669"/>
    <property type="project" value="Ensembl"/>
</dbReference>
<dbReference type="GO" id="GO:0035330">
    <property type="term" value="P:regulation of hippo signaling"/>
    <property type="evidence" value="ECO:0000314"/>
    <property type="project" value="UniProtKB"/>
</dbReference>
<dbReference type="CDD" id="cd08220">
    <property type="entry name" value="STKc_Nek8"/>
    <property type="match status" value="1"/>
</dbReference>
<dbReference type="FunFam" id="1.10.510.10:FF:000262">
    <property type="entry name" value="Serine/threonine-protein kinase Nek8"/>
    <property type="match status" value="1"/>
</dbReference>
<dbReference type="FunFam" id="2.130.10.30:FF:000017">
    <property type="entry name" value="Serine/threonine-protein kinase Nek8"/>
    <property type="match status" value="1"/>
</dbReference>
<dbReference type="FunFam" id="2.130.10.30:FF:000020">
    <property type="entry name" value="serine/threonine-protein kinase Nek8"/>
    <property type="match status" value="1"/>
</dbReference>
<dbReference type="FunFam" id="3.30.200.20:FF:000243">
    <property type="entry name" value="serine/threonine-protein kinase Nek8"/>
    <property type="match status" value="1"/>
</dbReference>
<dbReference type="Gene3D" id="3.30.200.20">
    <property type="entry name" value="Phosphorylase Kinase, domain 1"/>
    <property type="match status" value="1"/>
</dbReference>
<dbReference type="Gene3D" id="2.130.10.30">
    <property type="entry name" value="Regulator of chromosome condensation 1/beta-lactamase-inhibitor protein II"/>
    <property type="match status" value="2"/>
</dbReference>
<dbReference type="Gene3D" id="1.10.510.10">
    <property type="entry name" value="Transferase(Phosphotransferase) domain 1"/>
    <property type="match status" value="1"/>
</dbReference>
<dbReference type="InterPro" id="IPR011009">
    <property type="entry name" value="Kinase-like_dom_sf"/>
</dbReference>
<dbReference type="InterPro" id="IPR000719">
    <property type="entry name" value="Prot_kinase_dom"/>
</dbReference>
<dbReference type="InterPro" id="IPR017441">
    <property type="entry name" value="Protein_kinase_ATP_BS"/>
</dbReference>
<dbReference type="InterPro" id="IPR009091">
    <property type="entry name" value="RCC1/BLIP-II"/>
</dbReference>
<dbReference type="InterPro" id="IPR000408">
    <property type="entry name" value="Reg_chr_condens"/>
</dbReference>
<dbReference type="InterPro" id="IPR008271">
    <property type="entry name" value="Ser/Thr_kinase_AS"/>
</dbReference>
<dbReference type="InterPro" id="IPR051997">
    <property type="entry name" value="STK_NEK"/>
</dbReference>
<dbReference type="InterPro" id="IPR044120">
    <property type="entry name" value="STKc_Nek8"/>
</dbReference>
<dbReference type="PANTHER" id="PTHR44535">
    <property type="entry name" value="PROTEIN CBG16200"/>
    <property type="match status" value="1"/>
</dbReference>
<dbReference type="PANTHER" id="PTHR44535:SF4">
    <property type="entry name" value="SERINE_THREONINE-PROTEIN KINASE NEK8"/>
    <property type="match status" value="1"/>
</dbReference>
<dbReference type="Pfam" id="PF00069">
    <property type="entry name" value="Pkinase"/>
    <property type="match status" value="1"/>
</dbReference>
<dbReference type="Pfam" id="PF25390">
    <property type="entry name" value="WD40_RLD"/>
    <property type="match status" value="1"/>
</dbReference>
<dbReference type="PRINTS" id="PR00633">
    <property type="entry name" value="RCCNDNSATION"/>
</dbReference>
<dbReference type="SMART" id="SM00220">
    <property type="entry name" value="S_TKc"/>
    <property type="match status" value="1"/>
</dbReference>
<dbReference type="SUPFAM" id="SSF56112">
    <property type="entry name" value="Protein kinase-like (PK-like)"/>
    <property type="match status" value="1"/>
</dbReference>
<dbReference type="SUPFAM" id="SSF50985">
    <property type="entry name" value="RCC1/BLIP-II"/>
    <property type="match status" value="1"/>
</dbReference>
<dbReference type="PROSITE" id="PS00107">
    <property type="entry name" value="PROTEIN_KINASE_ATP"/>
    <property type="match status" value="1"/>
</dbReference>
<dbReference type="PROSITE" id="PS50011">
    <property type="entry name" value="PROTEIN_KINASE_DOM"/>
    <property type="match status" value="1"/>
</dbReference>
<dbReference type="PROSITE" id="PS00108">
    <property type="entry name" value="PROTEIN_KINASE_ST"/>
    <property type="match status" value="1"/>
</dbReference>
<dbReference type="PROSITE" id="PS50012">
    <property type="entry name" value="RCC1_3"/>
    <property type="match status" value="5"/>
</dbReference>